<dbReference type="EMBL" id="BA000051">
    <property type="protein sequence ID" value="BAE60038.1"/>
    <property type="molecule type" value="Genomic_DNA"/>
</dbReference>
<dbReference type="RefSeq" id="XP_001822040.1">
    <property type="nucleotide sequence ID" value="XM_001821988.1"/>
</dbReference>
<dbReference type="SMR" id="Q2UEH7"/>
<dbReference type="STRING" id="510516.Q2UEH7"/>
<dbReference type="EnsemblFungi" id="BAE60038">
    <property type="protein sequence ID" value="BAE60038"/>
    <property type="gene ID" value="AO090026000614"/>
</dbReference>
<dbReference type="GeneID" id="5994068"/>
<dbReference type="KEGG" id="aor:AO090026000614"/>
<dbReference type="VEuPathDB" id="FungiDB:AO090026000614"/>
<dbReference type="HOGENOM" id="CLU_011099_0_0_1"/>
<dbReference type="OMA" id="VDDNKWM"/>
<dbReference type="OrthoDB" id="95816at5052"/>
<dbReference type="PHI-base" id="PHI:6872"/>
<dbReference type="Proteomes" id="UP000006564">
    <property type="component" value="Chromosome 3"/>
</dbReference>
<dbReference type="GO" id="GO:0016020">
    <property type="term" value="C:membrane"/>
    <property type="evidence" value="ECO:0007669"/>
    <property type="project" value="UniProtKB-SubCell"/>
</dbReference>
<dbReference type="GO" id="GO:0005634">
    <property type="term" value="C:nucleus"/>
    <property type="evidence" value="ECO:0007669"/>
    <property type="project" value="UniProtKB-SubCell"/>
</dbReference>
<dbReference type="GO" id="GO:0003677">
    <property type="term" value="F:DNA binding"/>
    <property type="evidence" value="ECO:0007669"/>
    <property type="project" value="UniProtKB-KW"/>
</dbReference>
<dbReference type="GO" id="GO:0000981">
    <property type="term" value="F:DNA-binding transcription factor activity, RNA polymerase II-specific"/>
    <property type="evidence" value="ECO:0007669"/>
    <property type="project" value="InterPro"/>
</dbReference>
<dbReference type="GO" id="GO:0008270">
    <property type="term" value="F:zinc ion binding"/>
    <property type="evidence" value="ECO:0007669"/>
    <property type="project" value="InterPro"/>
</dbReference>
<dbReference type="GO" id="GO:0006351">
    <property type="term" value="P:DNA-templated transcription"/>
    <property type="evidence" value="ECO:0007669"/>
    <property type="project" value="InterPro"/>
</dbReference>
<dbReference type="GO" id="GO:0009893">
    <property type="term" value="P:positive regulation of metabolic process"/>
    <property type="evidence" value="ECO:0007669"/>
    <property type="project" value="UniProtKB-ARBA"/>
</dbReference>
<dbReference type="CDD" id="cd12148">
    <property type="entry name" value="fungal_TF_MHR"/>
    <property type="match status" value="1"/>
</dbReference>
<dbReference type="CDD" id="cd00067">
    <property type="entry name" value="GAL4"/>
    <property type="match status" value="1"/>
</dbReference>
<dbReference type="Gene3D" id="4.10.240.10">
    <property type="entry name" value="Zn(2)-C6 fungal-type DNA-binding domain"/>
    <property type="match status" value="1"/>
</dbReference>
<dbReference type="InterPro" id="IPR050987">
    <property type="entry name" value="AtrR-like"/>
</dbReference>
<dbReference type="InterPro" id="IPR007219">
    <property type="entry name" value="Transcription_factor_dom_fun"/>
</dbReference>
<dbReference type="InterPro" id="IPR036864">
    <property type="entry name" value="Zn2-C6_fun-type_DNA-bd_sf"/>
</dbReference>
<dbReference type="InterPro" id="IPR001138">
    <property type="entry name" value="Zn2Cys6_DnaBD"/>
</dbReference>
<dbReference type="PANTHER" id="PTHR46910:SF25">
    <property type="entry name" value="ABC-TRANSPORTER-REGULATING TRANSCRIPTION FACTOR"/>
    <property type="match status" value="1"/>
</dbReference>
<dbReference type="PANTHER" id="PTHR46910">
    <property type="entry name" value="TRANSCRIPTION FACTOR PDR1"/>
    <property type="match status" value="1"/>
</dbReference>
<dbReference type="Pfam" id="PF04082">
    <property type="entry name" value="Fungal_trans"/>
    <property type="match status" value="1"/>
</dbReference>
<dbReference type="Pfam" id="PF00172">
    <property type="entry name" value="Zn_clus"/>
    <property type="match status" value="1"/>
</dbReference>
<dbReference type="SMART" id="SM00906">
    <property type="entry name" value="Fungal_trans"/>
    <property type="match status" value="1"/>
</dbReference>
<dbReference type="SMART" id="SM00066">
    <property type="entry name" value="GAL4"/>
    <property type="match status" value="1"/>
</dbReference>
<dbReference type="SUPFAM" id="SSF57701">
    <property type="entry name" value="Zn2/Cys6 DNA-binding domain"/>
    <property type="match status" value="1"/>
</dbReference>
<dbReference type="PROSITE" id="PS00463">
    <property type="entry name" value="ZN2_CY6_FUNGAL_1"/>
    <property type="match status" value="1"/>
</dbReference>
<dbReference type="PROSITE" id="PS50048">
    <property type="entry name" value="ZN2_CY6_FUNGAL_2"/>
    <property type="match status" value="1"/>
</dbReference>
<gene>
    <name evidence="5" type="primary">atrR</name>
    <name type="ORF">AO090026000614</name>
</gene>
<accession>Q2UEH7</accession>
<name>ATRR_ASPOR</name>
<evidence type="ECO:0000255" key="1"/>
<evidence type="ECO:0000255" key="2">
    <source>
        <dbReference type="PROSITE-ProRule" id="PRU00227"/>
    </source>
</evidence>
<evidence type="ECO:0000256" key="3">
    <source>
        <dbReference type="SAM" id="MobiDB-lite"/>
    </source>
</evidence>
<evidence type="ECO:0000269" key="4">
    <source>
    </source>
</evidence>
<evidence type="ECO:0000303" key="5">
    <source>
    </source>
</evidence>
<proteinExistence type="inferred from homology"/>
<comment type="function">
    <text evidence="4">Transcription factor that regulates expression of the genes related to resistance to azole compounds.</text>
</comment>
<comment type="subcellular location">
    <subcellularLocation>
        <location evidence="2">Nucleus</location>
    </subcellularLocation>
    <subcellularLocation>
        <location evidence="1">Membrane</location>
        <topology evidence="1">Single-pass membrane protein</topology>
    </subcellularLocation>
</comment>
<comment type="disruption phenotype">
    <text evidence="4">Results in a hypersensitivity to miconazole.</text>
</comment>
<reference key="1">
    <citation type="journal article" date="2005" name="Nature">
        <title>Genome sequencing and analysis of Aspergillus oryzae.</title>
        <authorList>
            <person name="Machida M."/>
            <person name="Asai K."/>
            <person name="Sano M."/>
            <person name="Tanaka T."/>
            <person name="Kumagai T."/>
            <person name="Terai G."/>
            <person name="Kusumoto K."/>
            <person name="Arima T."/>
            <person name="Akita O."/>
            <person name="Kashiwagi Y."/>
            <person name="Abe K."/>
            <person name="Gomi K."/>
            <person name="Horiuchi H."/>
            <person name="Kitamoto K."/>
            <person name="Kobayashi T."/>
            <person name="Takeuchi M."/>
            <person name="Denning D.W."/>
            <person name="Galagan J.E."/>
            <person name="Nierman W.C."/>
            <person name="Yu J."/>
            <person name="Archer D.B."/>
            <person name="Bennett J.W."/>
            <person name="Bhatnagar D."/>
            <person name="Cleveland T.E."/>
            <person name="Fedorova N.D."/>
            <person name="Gotoh O."/>
            <person name="Horikawa H."/>
            <person name="Hosoyama A."/>
            <person name="Ichinomiya M."/>
            <person name="Igarashi R."/>
            <person name="Iwashita K."/>
            <person name="Juvvadi P.R."/>
            <person name="Kato M."/>
            <person name="Kato Y."/>
            <person name="Kin T."/>
            <person name="Kokubun A."/>
            <person name="Maeda H."/>
            <person name="Maeyama N."/>
            <person name="Maruyama J."/>
            <person name="Nagasaki H."/>
            <person name="Nakajima T."/>
            <person name="Oda K."/>
            <person name="Okada K."/>
            <person name="Paulsen I."/>
            <person name="Sakamoto K."/>
            <person name="Sawano T."/>
            <person name="Takahashi M."/>
            <person name="Takase K."/>
            <person name="Terabayashi Y."/>
            <person name="Wortman J.R."/>
            <person name="Yamada O."/>
            <person name="Yamagata Y."/>
            <person name="Anazawa H."/>
            <person name="Hata Y."/>
            <person name="Koide Y."/>
            <person name="Komori T."/>
            <person name="Koyama Y."/>
            <person name="Minetoki T."/>
            <person name="Suharnan S."/>
            <person name="Tanaka A."/>
            <person name="Isono K."/>
            <person name="Kuhara S."/>
            <person name="Ogasawara N."/>
            <person name="Kikuchi H."/>
        </authorList>
    </citation>
    <scope>NUCLEOTIDE SEQUENCE [LARGE SCALE GENOMIC DNA]</scope>
    <source>
        <strain>ATCC 42149 / RIB 40</strain>
    </source>
</reference>
<reference key="2">
    <citation type="journal article" date="2017" name="PLoS Pathog.">
        <title>A novel Zn2-Cys6 transcription factor atrR plays a key role in an azole resistance mechanism of Aspergillus fumigatus by co-regulating cyp51A and cdr1B Expressions.</title>
        <authorList>
            <person name="Hagiwara D."/>
            <person name="Miura D."/>
            <person name="Shimizu K."/>
            <person name="Paul S."/>
            <person name="Ohba A."/>
            <person name="Gonoi T."/>
            <person name="Watanabe A."/>
            <person name="Kamei K."/>
            <person name="Shintani T."/>
            <person name="Moye-Rowley W.S."/>
            <person name="Kawamoto S."/>
            <person name="Gomi K."/>
        </authorList>
    </citation>
    <scope>FUNCTION</scope>
    <scope>DISRUPTION PHENOTYPE</scope>
</reference>
<protein>
    <recommendedName>
        <fullName evidence="5">ABC-transporter-regulating transcription factor</fullName>
    </recommendedName>
</protein>
<feature type="chain" id="PRO_0000448725" description="ABC-transporter-regulating transcription factor">
    <location>
        <begin position="1"/>
        <end position="894"/>
    </location>
</feature>
<feature type="transmembrane region" description="Helical" evidence="1">
    <location>
        <begin position="649"/>
        <end position="669"/>
    </location>
</feature>
<feature type="DNA-binding region" description="Zn(2)-C6 fungal-type" evidence="2">
    <location>
        <begin position="71"/>
        <end position="98"/>
    </location>
</feature>
<feature type="region of interest" description="Disordered" evidence="3">
    <location>
        <begin position="159"/>
        <end position="219"/>
    </location>
</feature>
<feature type="region of interest" description="Disordered" evidence="3">
    <location>
        <begin position="724"/>
        <end position="797"/>
    </location>
</feature>
<feature type="compositionally biased region" description="Polar residues" evidence="3">
    <location>
        <begin position="159"/>
        <end position="174"/>
    </location>
</feature>
<feature type="compositionally biased region" description="Low complexity" evidence="3">
    <location>
        <begin position="175"/>
        <end position="189"/>
    </location>
</feature>
<feature type="compositionally biased region" description="Polar residues" evidence="3">
    <location>
        <begin position="199"/>
        <end position="210"/>
    </location>
</feature>
<feature type="compositionally biased region" description="Basic and acidic residues" evidence="3">
    <location>
        <begin position="736"/>
        <end position="750"/>
    </location>
</feature>
<feature type="compositionally biased region" description="Polar residues" evidence="3">
    <location>
        <begin position="751"/>
        <end position="761"/>
    </location>
</feature>
<feature type="compositionally biased region" description="Polar residues" evidence="3">
    <location>
        <begin position="771"/>
        <end position="792"/>
    </location>
</feature>
<keyword id="KW-0238">DNA-binding</keyword>
<keyword id="KW-0472">Membrane</keyword>
<keyword id="KW-0479">Metal-binding</keyword>
<keyword id="KW-0539">Nucleus</keyword>
<keyword id="KW-1185">Reference proteome</keyword>
<keyword id="KW-0804">Transcription</keyword>
<keyword id="KW-0805">Transcription regulation</keyword>
<keyword id="KW-0812">Transmembrane</keyword>
<keyword id="KW-1133">Transmembrane helix</keyword>
<keyword id="KW-0843">Virulence</keyword>
<keyword id="KW-0862">Zinc</keyword>
<organism>
    <name type="scientific">Aspergillus oryzae (strain ATCC 42149 / RIB 40)</name>
    <name type="common">Yellow koji mold</name>
    <dbReference type="NCBI Taxonomy" id="510516"/>
    <lineage>
        <taxon>Eukaryota</taxon>
        <taxon>Fungi</taxon>
        <taxon>Dikarya</taxon>
        <taxon>Ascomycota</taxon>
        <taxon>Pezizomycotina</taxon>
        <taxon>Eurotiomycetes</taxon>
        <taxon>Eurotiomycetidae</taxon>
        <taxon>Eurotiales</taxon>
        <taxon>Aspergillaceae</taxon>
        <taxon>Aspergillus</taxon>
        <taxon>Aspergillus subgen. Circumdati</taxon>
    </lineage>
</organism>
<sequence length="894" mass="99958">MDGMGEGPDGMGFDMPMLMNQQPHLFGGYSRDSSRGSPLNNVLSNPTYNEEPGMAGEDNNDAKRRRIARACDMCRKKKIKCDGKMPKCSHCINYRTDCVFTQVEKKRNPPKGAKYIEGLENRLGRMESLLRLSGLLSEDDGKTDLGTLEKRLADRSLGNTALNSLKSPTNKFNGSSATSQSQHTTASRHSTPRMDSHSSPHTAATSPNSPKESETEVEGLSDMMCSLVTNNCGETRYIGSSSGFSIFSPKGIQWVNEKTGDTSFQEMISSAYVDDNKWMYWKPEIFSDIFARRVFKPLPPKEEALSLFRDFFENFNCMFPLFHEPTFMHLVERQYSRDPYEGSGWWASINVVLAIAHRLRVMSNLVPQEEDKKAWLYLKNAMGVLTELTMRNTDLLSVQALLGMSLFLQGTPNPQPSFFLVAAAIRLSHSIGLHKRGSGFGLNPVEVEQRKRVFWIAYLLDKDICLRSGRPPVQDDDDMNVELPSEDPPDNIGNVPLSDGKGKFNLFRTLCRFATIESKVYKRLYSAKASKQSDGELLNTIGELDRELEEWKDSIPIDFRPEHEIKASHTPLILHVVVLHFSYYNCLTTIHRMSVHHGYWTSRLSNYAIQGLNARPLNPRVFLSAVLCVTAARASINLIKYIPHGDFACVWLILYYPVSALVTLFANILQNPNDARARSDVKLMNVVVNFLSTLVSDESNGSIKRMLGLCGEFERIAQVVLDKAEKESHSKKKRKAAPDEPQDLRQKTPDENSVPSPSTKRPTGAPPTATLFPSSSYPINLGNTGPDMSNPTRAFAPGQTVLGTNGVPTSMQESMHTMSGMGHDFPEMLSPNNMDSVGFGDQQPFGTPTETPMTSFQQPFVPQDLWQMPMTIEWDWADMSSNFPVFEGTPNTGP</sequence>